<proteinExistence type="inferred from homology"/>
<gene>
    <name evidence="1" type="primary">atpH</name>
    <name type="ordered locus">BUAP5A_005</name>
</gene>
<organism>
    <name type="scientific">Buchnera aphidicola subsp. Acyrthosiphon pisum (strain 5A)</name>
    <dbReference type="NCBI Taxonomy" id="563178"/>
    <lineage>
        <taxon>Bacteria</taxon>
        <taxon>Pseudomonadati</taxon>
        <taxon>Pseudomonadota</taxon>
        <taxon>Gammaproteobacteria</taxon>
        <taxon>Enterobacterales</taxon>
        <taxon>Erwiniaceae</taxon>
        <taxon>Buchnera</taxon>
    </lineage>
</organism>
<reference key="1">
    <citation type="journal article" date="2009" name="Science">
        <title>The dynamics and time scale of ongoing genomic erosion in symbiotic bacteria.</title>
        <authorList>
            <person name="Moran N.A."/>
            <person name="McLaughlin H.J."/>
            <person name="Sorek R."/>
        </authorList>
    </citation>
    <scope>NUCLEOTIDE SEQUENCE [LARGE SCALE GENOMIC DNA]</scope>
    <source>
        <strain>5A</strain>
    </source>
</reference>
<sequence>MSVADTIARPYAQAIFEIAIENNTIEKWKNILIFIKTIASHKKFKNFLSGSISPKYLSLIFITIGTNIIDENAKNLIKLLSENQRFNILNNIFERFVKLEACYKNIIIVQLKSAFSLKENHINKIRKVLERFFLKKTKIIYKVDPNILNGMIVKVNNTIFDLSAQNHLKQLSDSLNF</sequence>
<keyword id="KW-0066">ATP synthesis</keyword>
<keyword id="KW-1003">Cell membrane</keyword>
<keyword id="KW-0139">CF(1)</keyword>
<keyword id="KW-0375">Hydrogen ion transport</keyword>
<keyword id="KW-0406">Ion transport</keyword>
<keyword id="KW-0472">Membrane</keyword>
<keyword id="KW-0813">Transport</keyword>
<dbReference type="EMBL" id="CP001161">
    <property type="protein sequence ID" value="ACL30392.1"/>
    <property type="molecule type" value="Genomic_DNA"/>
</dbReference>
<dbReference type="RefSeq" id="WP_009873967.1">
    <property type="nucleotide sequence ID" value="NC_011833.1"/>
</dbReference>
<dbReference type="SMR" id="B8D8H0"/>
<dbReference type="KEGG" id="bap:BUAP5A_005"/>
<dbReference type="HOGENOM" id="CLU_085114_3_0_6"/>
<dbReference type="OrthoDB" id="9816221at2"/>
<dbReference type="Proteomes" id="UP000006904">
    <property type="component" value="Chromosome"/>
</dbReference>
<dbReference type="GO" id="GO:0005886">
    <property type="term" value="C:plasma membrane"/>
    <property type="evidence" value="ECO:0007669"/>
    <property type="project" value="UniProtKB-SubCell"/>
</dbReference>
<dbReference type="GO" id="GO:0045259">
    <property type="term" value="C:proton-transporting ATP synthase complex"/>
    <property type="evidence" value="ECO:0007669"/>
    <property type="project" value="UniProtKB-KW"/>
</dbReference>
<dbReference type="GO" id="GO:0046933">
    <property type="term" value="F:proton-transporting ATP synthase activity, rotational mechanism"/>
    <property type="evidence" value="ECO:0007669"/>
    <property type="project" value="UniProtKB-UniRule"/>
</dbReference>
<dbReference type="Gene3D" id="1.10.520.20">
    <property type="entry name" value="N-terminal domain of the delta subunit of the F1F0-ATP synthase"/>
    <property type="match status" value="1"/>
</dbReference>
<dbReference type="HAMAP" id="MF_01416">
    <property type="entry name" value="ATP_synth_delta_bact"/>
    <property type="match status" value="1"/>
</dbReference>
<dbReference type="InterPro" id="IPR026015">
    <property type="entry name" value="ATP_synth_OSCP/delta_N_sf"/>
</dbReference>
<dbReference type="InterPro" id="IPR000711">
    <property type="entry name" value="ATPase_OSCP/dsu"/>
</dbReference>
<dbReference type="NCBIfam" id="TIGR01145">
    <property type="entry name" value="ATP_synt_delta"/>
    <property type="match status" value="1"/>
</dbReference>
<dbReference type="NCBIfam" id="NF004402">
    <property type="entry name" value="PRK05758.2-2"/>
    <property type="match status" value="1"/>
</dbReference>
<dbReference type="PANTHER" id="PTHR11910">
    <property type="entry name" value="ATP SYNTHASE DELTA CHAIN"/>
    <property type="match status" value="1"/>
</dbReference>
<dbReference type="Pfam" id="PF00213">
    <property type="entry name" value="OSCP"/>
    <property type="match status" value="1"/>
</dbReference>
<dbReference type="PRINTS" id="PR00125">
    <property type="entry name" value="ATPASEDELTA"/>
</dbReference>
<dbReference type="SUPFAM" id="SSF47928">
    <property type="entry name" value="N-terminal domain of the delta subunit of the F1F0-ATP synthase"/>
    <property type="match status" value="1"/>
</dbReference>
<comment type="function">
    <text evidence="1">F(1)F(0) ATP synthase produces ATP from ADP in the presence of a proton or sodium gradient. F-type ATPases consist of two structural domains, F(1) containing the extramembraneous catalytic core and F(0) containing the membrane proton channel, linked together by a central stalk and a peripheral stalk. During catalysis, ATP synthesis in the catalytic domain of F(1) is coupled via a rotary mechanism of the central stalk subunits to proton translocation.</text>
</comment>
<comment type="function">
    <text evidence="1">This protein is part of the stalk that links CF(0) to CF(1). It either transmits conformational changes from CF(0) to CF(1) or is implicated in proton conduction.</text>
</comment>
<comment type="subunit">
    <text evidence="1">F-type ATPases have 2 components, F(1) - the catalytic core - and F(0) - the membrane proton channel. F(1) has five subunits: alpha(3), beta(3), gamma(1), delta(1), epsilon(1). F(0) has three main subunits: a(1), b(2) and c(10-14). The alpha and beta chains form an alternating ring which encloses part of the gamma chain. F(1) is attached to F(0) by a central stalk formed by the gamma and epsilon chains, while a peripheral stalk is formed by the delta and b chains.</text>
</comment>
<comment type="subcellular location">
    <subcellularLocation>
        <location evidence="1">Cell membrane</location>
        <topology evidence="1">Peripheral membrane protein</topology>
    </subcellularLocation>
</comment>
<comment type="similarity">
    <text evidence="1">Belongs to the ATPase delta chain family.</text>
</comment>
<evidence type="ECO:0000255" key="1">
    <source>
        <dbReference type="HAMAP-Rule" id="MF_01416"/>
    </source>
</evidence>
<accession>B8D8H0</accession>
<protein>
    <recommendedName>
        <fullName evidence="1">ATP synthase subunit delta</fullName>
    </recommendedName>
    <alternativeName>
        <fullName evidence="1">ATP synthase F(1) sector subunit delta</fullName>
    </alternativeName>
    <alternativeName>
        <fullName evidence="1">F-type ATPase subunit delta</fullName>
        <shortName evidence="1">F-ATPase subunit delta</shortName>
    </alternativeName>
</protein>
<name>ATPD_BUCA5</name>
<feature type="chain" id="PRO_1000184662" description="ATP synthase subunit delta">
    <location>
        <begin position="1"/>
        <end position="177"/>
    </location>
</feature>